<feature type="chain" id="PRO_0000342314" description="Uncharacterized zinc finger protein 70">
    <location>
        <begin position="1"/>
        <end position="70"/>
    </location>
</feature>
<feature type="zinc finger region" description="C2H2-type" evidence="1">
    <location>
        <begin position="21"/>
        <end position="43"/>
    </location>
</feature>
<accession>Q8QL35</accession>
<name>Y70_SIRV1</name>
<organismHost>
    <name type="scientific">Saccharolobus islandicus</name>
    <name type="common">Sulfolobus islandicus</name>
    <dbReference type="NCBI Taxonomy" id="43080"/>
</organismHost>
<organism>
    <name type="scientific">Sulfolobus islandicus rod-shaped virus 1</name>
    <name type="common">SIRV-1</name>
    <name type="synonym">Sulfolobus virus SIRV-1</name>
    <dbReference type="NCBI Taxonomy" id="157898"/>
    <lineage>
        <taxon>Viruses</taxon>
        <taxon>Adnaviria</taxon>
        <taxon>Zilligvirae</taxon>
        <taxon>Taleaviricota</taxon>
        <taxon>Tokiviricetes</taxon>
        <taxon>Ligamenvirales</taxon>
        <taxon>Rudiviridae</taxon>
        <taxon>Icerudivirus</taxon>
        <taxon>Icerudivirus SIRV1</taxon>
    </lineage>
</organism>
<dbReference type="EMBL" id="AJ414696">
    <property type="protein sequence ID" value="CAC93975.1"/>
    <property type="molecule type" value="Genomic_DNA"/>
</dbReference>
<dbReference type="RefSeq" id="NP_666608.1">
    <property type="nucleotide sequence ID" value="NC_004087.1"/>
</dbReference>
<dbReference type="SMR" id="Q8QL35"/>
<dbReference type="KEGG" id="vg:951399"/>
<dbReference type="OrthoDB" id="23361at10239"/>
<dbReference type="Proteomes" id="UP000002270">
    <property type="component" value="Genome"/>
</dbReference>
<dbReference type="GO" id="GO:0008270">
    <property type="term" value="F:zinc ion binding"/>
    <property type="evidence" value="ECO:0007669"/>
    <property type="project" value="UniProtKB-KW"/>
</dbReference>
<dbReference type="InterPro" id="IPR036236">
    <property type="entry name" value="Znf_C2H2_sf"/>
</dbReference>
<dbReference type="InterPro" id="IPR013087">
    <property type="entry name" value="Znf_C2H2_type"/>
</dbReference>
<dbReference type="SMART" id="SM00355">
    <property type="entry name" value="ZnF_C2H2"/>
    <property type="match status" value="1"/>
</dbReference>
<dbReference type="SUPFAM" id="SSF57667">
    <property type="entry name" value="beta-beta-alpha zinc fingers"/>
    <property type="match status" value="1"/>
</dbReference>
<dbReference type="PROSITE" id="PS00028">
    <property type="entry name" value="ZINC_FINGER_C2H2_1"/>
    <property type="match status" value="1"/>
</dbReference>
<dbReference type="PROSITE" id="PS50157">
    <property type="entry name" value="ZINC_FINGER_C2H2_2"/>
    <property type="match status" value="1"/>
</dbReference>
<evidence type="ECO:0000255" key="1">
    <source>
        <dbReference type="PROSITE-ProRule" id="PRU00042"/>
    </source>
</evidence>
<keyword id="KW-0479">Metal-binding</keyword>
<keyword id="KW-1185">Reference proteome</keyword>
<keyword id="KW-0862">Zinc</keyword>
<keyword id="KW-0863">Zinc-finger</keyword>
<proteinExistence type="predicted"/>
<sequence length="70" mass="8247">MDLIAFKNVKSKFLLMALLGYECPICGEIYIKRKSMITHLRKHNTNLKLSNCRRISLRTGEYIEIKTEEE</sequence>
<gene>
    <name type="ORF">70</name>
</gene>
<protein>
    <recommendedName>
        <fullName>Uncharacterized zinc finger protein 70</fullName>
    </recommendedName>
</protein>
<reference key="1">
    <citation type="journal article" date="2001" name="Virology">
        <title>Sequences and replication of genomes of the archaeal rudiviruses SIRV1 and SIRV2: relationships to the archaeal lipothrixvirus SIFV and some eukaryal viruses.</title>
        <authorList>
            <person name="Peng X."/>
            <person name="Blum H."/>
            <person name="She Q."/>
            <person name="Mallok S."/>
            <person name="Bruegger K."/>
            <person name="Garrett R.A."/>
            <person name="Zillig W."/>
            <person name="Prangishvili D."/>
        </authorList>
    </citation>
    <scope>NUCLEOTIDE SEQUENCE [LARGE SCALE GENOMIC DNA]</scope>
    <source>
        <strain>Isolate variant VIII</strain>
    </source>
</reference>